<accession>Q8AAN9</accession>
<reference key="1">
    <citation type="journal article" date="2003" name="Science">
        <title>A genomic view of the human-Bacteroides thetaiotaomicron symbiosis.</title>
        <authorList>
            <person name="Xu J."/>
            <person name="Bjursell M.K."/>
            <person name="Himrod J."/>
            <person name="Deng S."/>
            <person name="Carmichael L.K."/>
            <person name="Chiang H.C."/>
            <person name="Hooper L.V."/>
            <person name="Gordon J.I."/>
        </authorList>
    </citation>
    <scope>NUCLEOTIDE SEQUENCE [LARGE SCALE GENOMIC DNA]</scope>
    <source>
        <strain>ATCC 29148 / DSM 2079 / JCM 5827 / CCUG 10774 / NCTC 10582 / VPI-5482 / E50</strain>
    </source>
</reference>
<sequence>MPRSVNHVASKARRKKILKLTRGYFGARKNVWTVAKNTWEKGLTYAFRDRRNKKRNFRALWIQRINAAARLEGMSYSKLMGGLHKAGIEINRKVLADLAMNHPEAFKAVVAKAKAA</sequence>
<feature type="chain" id="PRO_0000177121" description="Large ribosomal subunit protein bL20">
    <location>
        <begin position="1"/>
        <end position="116"/>
    </location>
</feature>
<keyword id="KW-1185">Reference proteome</keyword>
<keyword id="KW-0687">Ribonucleoprotein</keyword>
<keyword id="KW-0689">Ribosomal protein</keyword>
<keyword id="KW-0694">RNA-binding</keyword>
<keyword id="KW-0699">rRNA-binding</keyword>
<name>RL20_BACTN</name>
<organism>
    <name type="scientific">Bacteroides thetaiotaomicron (strain ATCC 29148 / DSM 2079 / JCM 5827 / CCUG 10774 / NCTC 10582 / VPI-5482 / E50)</name>
    <dbReference type="NCBI Taxonomy" id="226186"/>
    <lineage>
        <taxon>Bacteria</taxon>
        <taxon>Pseudomonadati</taxon>
        <taxon>Bacteroidota</taxon>
        <taxon>Bacteroidia</taxon>
        <taxon>Bacteroidales</taxon>
        <taxon>Bacteroidaceae</taxon>
        <taxon>Bacteroides</taxon>
    </lineage>
</organism>
<evidence type="ECO:0000255" key="1">
    <source>
        <dbReference type="HAMAP-Rule" id="MF_00382"/>
    </source>
</evidence>
<evidence type="ECO:0000305" key="2"/>
<comment type="function">
    <text evidence="1">Binds directly to 23S ribosomal RNA and is necessary for the in vitro assembly process of the 50S ribosomal subunit. It is not involved in the protein synthesizing functions of that subunit.</text>
</comment>
<comment type="similarity">
    <text evidence="1">Belongs to the bacterial ribosomal protein bL20 family.</text>
</comment>
<protein>
    <recommendedName>
        <fullName evidence="1">Large ribosomal subunit protein bL20</fullName>
    </recommendedName>
    <alternativeName>
        <fullName evidence="2">50S ribosomal protein L20</fullName>
    </alternativeName>
</protein>
<proteinExistence type="inferred from homology"/>
<dbReference type="EMBL" id="AE015928">
    <property type="protein sequence ID" value="AAO75532.1"/>
    <property type="molecule type" value="Genomic_DNA"/>
</dbReference>
<dbReference type="RefSeq" id="NP_809338.1">
    <property type="nucleotide sequence ID" value="NC_004663.1"/>
</dbReference>
<dbReference type="RefSeq" id="WP_004297540.1">
    <property type="nucleotide sequence ID" value="NZ_UYXG01000041.1"/>
</dbReference>
<dbReference type="SMR" id="Q8AAN9"/>
<dbReference type="FunCoup" id="Q8AAN9">
    <property type="interactions" value="572"/>
</dbReference>
<dbReference type="STRING" id="226186.BT_0425"/>
<dbReference type="PaxDb" id="226186-BT_0425"/>
<dbReference type="EnsemblBacteria" id="AAO75532">
    <property type="protein sequence ID" value="AAO75532"/>
    <property type="gene ID" value="BT_0425"/>
</dbReference>
<dbReference type="GeneID" id="93116721"/>
<dbReference type="KEGG" id="bth:BT_0425"/>
<dbReference type="PATRIC" id="fig|226186.12.peg.424"/>
<dbReference type="eggNOG" id="COG0292">
    <property type="taxonomic scope" value="Bacteria"/>
</dbReference>
<dbReference type="HOGENOM" id="CLU_123265_0_1_10"/>
<dbReference type="InParanoid" id="Q8AAN9"/>
<dbReference type="OrthoDB" id="9808966at2"/>
<dbReference type="Proteomes" id="UP000001414">
    <property type="component" value="Chromosome"/>
</dbReference>
<dbReference type="GO" id="GO:0022625">
    <property type="term" value="C:cytosolic large ribosomal subunit"/>
    <property type="evidence" value="ECO:0000318"/>
    <property type="project" value="GO_Central"/>
</dbReference>
<dbReference type="GO" id="GO:0019843">
    <property type="term" value="F:rRNA binding"/>
    <property type="evidence" value="ECO:0007669"/>
    <property type="project" value="UniProtKB-UniRule"/>
</dbReference>
<dbReference type="GO" id="GO:0003735">
    <property type="term" value="F:structural constituent of ribosome"/>
    <property type="evidence" value="ECO:0000318"/>
    <property type="project" value="GO_Central"/>
</dbReference>
<dbReference type="GO" id="GO:0000027">
    <property type="term" value="P:ribosomal large subunit assembly"/>
    <property type="evidence" value="ECO:0007669"/>
    <property type="project" value="UniProtKB-UniRule"/>
</dbReference>
<dbReference type="GO" id="GO:0006412">
    <property type="term" value="P:translation"/>
    <property type="evidence" value="ECO:0007669"/>
    <property type="project" value="InterPro"/>
</dbReference>
<dbReference type="CDD" id="cd07026">
    <property type="entry name" value="Ribosomal_L20"/>
    <property type="match status" value="1"/>
</dbReference>
<dbReference type="FunFam" id="1.10.1900.20:FF:000001">
    <property type="entry name" value="50S ribosomal protein L20"/>
    <property type="match status" value="1"/>
</dbReference>
<dbReference type="Gene3D" id="6.10.160.10">
    <property type="match status" value="1"/>
</dbReference>
<dbReference type="Gene3D" id="1.10.1900.20">
    <property type="entry name" value="Ribosomal protein L20"/>
    <property type="match status" value="1"/>
</dbReference>
<dbReference type="HAMAP" id="MF_00382">
    <property type="entry name" value="Ribosomal_bL20"/>
    <property type="match status" value="1"/>
</dbReference>
<dbReference type="InterPro" id="IPR005813">
    <property type="entry name" value="Ribosomal_bL20"/>
</dbReference>
<dbReference type="InterPro" id="IPR049946">
    <property type="entry name" value="RIBOSOMAL_L20_CS"/>
</dbReference>
<dbReference type="InterPro" id="IPR035566">
    <property type="entry name" value="Ribosomal_protein_bL20_C"/>
</dbReference>
<dbReference type="NCBIfam" id="TIGR01032">
    <property type="entry name" value="rplT_bact"/>
    <property type="match status" value="1"/>
</dbReference>
<dbReference type="PANTHER" id="PTHR10986">
    <property type="entry name" value="39S RIBOSOMAL PROTEIN L20"/>
    <property type="match status" value="1"/>
</dbReference>
<dbReference type="Pfam" id="PF00453">
    <property type="entry name" value="Ribosomal_L20"/>
    <property type="match status" value="1"/>
</dbReference>
<dbReference type="PRINTS" id="PR00062">
    <property type="entry name" value="RIBOSOMALL20"/>
</dbReference>
<dbReference type="SUPFAM" id="SSF74731">
    <property type="entry name" value="Ribosomal protein L20"/>
    <property type="match status" value="1"/>
</dbReference>
<dbReference type="PROSITE" id="PS00937">
    <property type="entry name" value="RIBOSOMAL_L20"/>
    <property type="match status" value="1"/>
</dbReference>
<gene>
    <name evidence="1" type="primary">rplT</name>
    <name type="ordered locus">BT_0425</name>
</gene>